<sequence length="65" mass="7484">MPKMKTHKGAKKRVKITASGKVVAMKTGKRHLNWQKSGKEIRQKGRKFVLAKPEAERIKLLLPYE</sequence>
<dbReference type="EMBL" id="AE017221">
    <property type="protein sequence ID" value="AAS80532.1"/>
    <property type="status" value="ALT_INIT"/>
    <property type="molecule type" value="Genomic_DNA"/>
</dbReference>
<dbReference type="RefSeq" id="WP_011172638.1">
    <property type="nucleotide sequence ID" value="NC_005835.1"/>
</dbReference>
<dbReference type="PDB" id="4V4I">
    <property type="method" value="X-ray"/>
    <property type="resolution" value="3.71 A"/>
    <property type="chains" value="a=1-65"/>
</dbReference>
<dbReference type="PDB" id="4V4J">
    <property type="method" value="X-ray"/>
    <property type="resolution" value="3.83 A"/>
    <property type="chains" value="a=1-65"/>
</dbReference>
<dbReference type="PDB" id="4V63">
    <property type="method" value="X-ray"/>
    <property type="resolution" value="3.21 A"/>
    <property type="chains" value="B8/D8=1-65"/>
</dbReference>
<dbReference type="PDB" id="4V67">
    <property type="method" value="X-ray"/>
    <property type="resolution" value="3.00 A"/>
    <property type="chains" value="B8/D8=1-65"/>
</dbReference>
<dbReference type="PDB" id="4V7P">
    <property type="method" value="X-ray"/>
    <property type="resolution" value="3.62 A"/>
    <property type="chains" value="B5/C5=2-65"/>
</dbReference>
<dbReference type="PDB" id="4V83">
    <property type="method" value="X-ray"/>
    <property type="resolution" value="3.50 A"/>
    <property type="chains" value="B5/D5=2-64"/>
</dbReference>
<dbReference type="PDB" id="4V84">
    <property type="method" value="X-ray"/>
    <property type="resolution" value="3.40 A"/>
    <property type="chains" value="B5/D5=2-64"/>
</dbReference>
<dbReference type="PDB" id="4V9J">
    <property type="method" value="X-ray"/>
    <property type="resolution" value="3.86 A"/>
    <property type="chains" value="B8/D8=2-65"/>
</dbReference>
<dbReference type="PDB" id="4V9K">
    <property type="method" value="X-ray"/>
    <property type="resolution" value="3.50 A"/>
    <property type="chains" value="B8/D8=2-65"/>
</dbReference>
<dbReference type="PDB" id="4V9L">
    <property type="method" value="X-ray"/>
    <property type="resolution" value="3.50 A"/>
    <property type="chains" value="B8/D8=2-65"/>
</dbReference>
<dbReference type="PDB" id="4V9M">
    <property type="method" value="X-ray"/>
    <property type="resolution" value="4.00 A"/>
    <property type="chains" value="B8/D8=2-65"/>
</dbReference>
<dbReference type="PDB" id="4V9N">
    <property type="method" value="X-ray"/>
    <property type="resolution" value="3.40 A"/>
    <property type="chains" value="B8/D8=2-64"/>
</dbReference>
<dbReference type="PDB" id="4V9Q">
    <property type="method" value="X-ray"/>
    <property type="resolution" value="3.40 A"/>
    <property type="chains" value="A5/C5=2-64"/>
</dbReference>
<dbReference type="PDB" id="4W29">
    <property type="method" value="X-ray"/>
    <property type="resolution" value="3.80 A"/>
    <property type="chains" value="B8/D8=2-65"/>
</dbReference>
<dbReference type="PDB" id="4XEJ">
    <property type="method" value="X-ray"/>
    <property type="resolution" value="3.80 A"/>
    <property type="chains" value="AL35/BL35=2-64"/>
</dbReference>
<dbReference type="PDB" id="5J4D">
    <property type="method" value="X-ray"/>
    <property type="resolution" value="3.10 A"/>
    <property type="chains" value="FA/KC=1-65"/>
</dbReference>
<dbReference type="PDB" id="5V8I">
    <property type="method" value="X-ray"/>
    <property type="resolution" value="3.25 A"/>
    <property type="chains" value="18/28=1-65"/>
</dbReference>
<dbReference type="PDB" id="6B4V">
    <property type="method" value="X-ray"/>
    <property type="resolution" value="3.40 A"/>
    <property type="chains" value="FA/JC=1-65"/>
</dbReference>
<dbReference type="PDB" id="6BOH">
    <property type="method" value="X-ray"/>
    <property type="resolution" value="3.40 A"/>
    <property type="chains" value="FA/KC=1-65"/>
</dbReference>
<dbReference type="PDB" id="6BOK">
    <property type="method" value="X-ray"/>
    <property type="resolution" value="3.55 A"/>
    <property type="chains" value="FA/IC=1-65"/>
</dbReference>
<dbReference type="PDB" id="6N1D">
    <property type="method" value="X-ray"/>
    <property type="resolution" value="3.20 A"/>
    <property type="chains" value="AL35/BL35=2-65"/>
</dbReference>
<dbReference type="PDBsum" id="4V4I"/>
<dbReference type="PDBsum" id="4V4J"/>
<dbReference type="PDBsum" id="4V63"/>
<dbReference type="PDBsum" id="4V67"/>
<dbReference type="PDBsum" id="4V7P"/>
<dbReference type="PDBsum" id="4V83"/>
<dbReference type="PDBsum" id="4V84"/>
<dbReference type="PDBsum" id="4V9J"/>
<dbReference type="PDBsum" id="4V9K"/>
<dbReference type="PDBsum" id="4V9L"/>
<dbReference type="PDBsum" id="4V9M"/>
<dbReference type="PDBsum" id="4V9N"/>
<dbReference type="PDBsum" id="4V9Q"/>
<dbReference type="PDBsum" id="4W29"/>
<dbReference type="PDBsum" id="4XEJ"/>
<dbReference type="PDBsum" id="5J4D"/>
<dbReference type="PDBsum" id="5V8I"/>
<dbReference type="PDBsum" id="6B4V"/>
<dbReference type="PDBsum" id="6BOH"/>
<dbReference type="PDBsum" id="6BOK"/>
<dbReference type="PDBsum" id="6N1D"/>
<dbReference type="SMR" id="Q72L77"/>
<dbReference type="IntAct" id="Q72L77">
    <property type="interactions" value="4"/>
</dbReference>
<dbReference type="GeneID" id="3169498"/>
<dbReference type="KEGG" id="tth:TT_C0184"/>
<dbReference type="eggNOG" id="COG0291">
    <property type="taxonomic scope" value="Bacteria"/>
</dbReference>
<dbReference type="HOGENOM" id="CLU_169643_2_2_0"/>
<dbReference type="OrthoDB" id="47476at2"/>
<dbReference type="Proteomes" id="UP000000592">
    <property type="component" value="Chromosome"/>
</dbReference>
<dbReference type="GO" id="GO:0022625">
    <property type="term" value="C:cytosolic large ribosomal subunit"/>
    <property type="evidence" value="ECO:0007669"/>
    <property type="project" value="TreeGrafter"/>
</dbReference>
<dbReference type="GO" id="GO:0003735">
    <property type="term" value="F:structural constituent of ribosome"/>
    <property type="evidence" value="ECO:0007669"/>
    <property type="project" value="InterPro"/>
</dbReference>
<dbReference type="GO" id="GO:0006412">
    <property type="term" value="P:translation"/>
    <property type="evidence" value="ECO:0007669"/>
    <property type="project" value="UniProtKB-UniRule"/>
</dbReference>
<dbReference type="FunFam" id="4.10.410.60:FF:000001">
    <property type="entry name" value="50S ribosomal protein L35"/>
    <property type="match status" value="1"/>
</dbReference>
<dbReference type="Gene3D" id="4.10.410.60">
    <property type="match status" value="1"/>
</dbReference>
<dbReference type="HAMAP" id="MF_00514">
    <property type="entry name" value="Ribosomal_bL35"/>
    <property type="match status" value="1"/>
</dbReference>
<dbReference type="InterPro" id="IPR001706">
    <property type="entry name" value="Ribosomal_bL35"/>
</dbReference>
<dbReference type="InterPro" id="IPR021137">
    <property type="entry name" value="Ribosomal_bL35-like"/>
</dbReference>
<dbReference type="InterPro" id="IPR018265">
    <property type="entry name" value="Ribosomal_bL35_CS"/>
</dbReference>
<dbReference type="InterPro" id="IPR037229">
    <property type="entry name" value="Ribosomal_bL35_sf"/>
</dbReference>
<dbReference type="NCBIfam" id="TIGR00001">
    <property type="entry name" value="rpmI_bact"/>
    <property type="match status" value="1"/>
</dbReference>
<dbReference type="PANTHER" id="PTHR33343">
    <property type="entry name" value="54S RIBOSOMAL PROTEIN BL35M"/>
    <property type="match status" value="1"/>
</dbReference>
<dbReference type="PANTHER" id="PTHR33343:SF1">
    <property type="entry name" value="LARGE RIBOSOMAL SUBUNIT PROTEIN BL35M"/>
    <property type="match status" value="1"/>
</dbReference>
<dbReference type="Pfam" id="PF01632">
    <property type="entry name" value="Ribosomal_L35p"/>
    <property type="match status" value="1"/>
</dbReference>
<dbReference type="PRINTS" id="PR00064">
    <property type="entry name" value="RIBOSOMALL35"/>
</dbReference>
<dbReference type="SUPFAM" id="SSF143034">
    <property type="entry name" value="L35p-like"/>
    <property type="match status" value="1"/>
</dbReference>
<dbReference type="PROSITE" id="PS00936">
    <property type="entry name" value="RIBOSOMAL_L35"/>
    <property type="match status" value="1"/>
</dbReference>
<protein>
    <recommendedName>
        <fullName evidence="2">Large ribosomal subunit protein bL35</fullName>
    </recommendedName>
    <alternativeName>
        <fullName evidence="3">50S ribosomal protein L35</fullName>
    </alternativeName>
</protein>
<keyword id="KW-0002">3D-structure</keyword>
<keyword id="KW-0687">Ribonucleoprotein</keyword>
<keyword id="KW-0689">Ribosomal protein</keyword>
<gene>
    <name evidence="2" type="primary">rpmI</name>
    <name type="ordered locus">TT_C0184</name>
</gene>
<accession>Q72L77</accession>
<feature type="initiator methionine" description="Removed" evidence="1">
    <location>
        <position position="1"/>
    </location>
</feature>
<feature type="chain" id="PRO_0000177442" description="Large ribosomal subunit protein bL35">
    <location>
        <begin position="2"/>
        <end position="65"/>
    </location>
</feature>
<feature type="helix" evidence="5">
    <location>
        <begin position="8"/>
        <end position="11"/>
    </location>
</feature>
<feature type="strand" evidence="5">
    <location>
        <begin position="14"/>
        <end position="16"/>
    </location>
</feature>
<feature type="strand" evidence="4">
    <location>
        <begin position="18"/>
        <end position="20"/>
    </location>
</feature>
<feature type="strand" evidence="5">
    <location>
        <begin position="22"/>
        <end position="25"/>
    </location>
</feature>
<feature type="strand" evidence="5">
    <location>
        <begin position="30"/>
        <end position="32"/>
    </location>
</feature>
<feature type="helix" evidence="5">
    <location>
        <begin position="38"/>
        <end position="45"/>
    </location>
</feature>
<feature type="strand" evidence="5">
    <location>
        <begin position="46"/>
        <end position="49"/>
    </location>
</feature>
<feature type="helix" evidence="5">
    <location>
        <begin position="52"/>
        <end position="58"/>
    </location>
</feature>
<reference key="1">
    <citation type="journal article" date="2004" name="Nat. Biotechnol.">
        <title>The genome sequence of the extreme thermophile Thermus thermophilus.</title>
        <authorList>
            <person name="Henne A."/>
            <person name="Brueggemann H."/>
            <person name="Raasch C."/>
            <person name="Wiezer A."/>
            <person name="Hartsch T."/>
            <person name="Liesegang H."/>
            <person name="Johann A."/>
            <person name="Lienard T."/>
            <person name="Gohl O."/>
            <person name="Martinez-Arias R."/>
            <person name="Jacobi C."/>
            <person name="Starkuviene V."/>
            <person name="Schlenczeck S."/>
            <person name="Dencker S."/>
            <person name="Huber R."/>
            <person name="Klenk H.-P."/>
            <person name="Kramer W."/>
            <person name="Merkl R."/>
            <person name="Gottschalk G."/>
            <person name="Fritz H.-J."/>
        </authorList>
    </citation>
    <scope>NUCLEOTIDE SEQUENCE [LARGE SCALE GENOMIC DNA]</scope>
    <source>
        <strain>ATCC BAA-163 / DSM 7039 / HB27</strain>
    </source>
</reference>
<comment type="similarity">
    <text evidence="2">Belongs to the bacterial ribosomal protein bL35 family.</text>
</comment>
<comment type="sequence caution" evidence="3">
    <conflict type="erroneous initiation">
        <sequence resource="EMBL-CDS" id="AAS80532"/>
    </conflict>
</comment>
<organism>
    <name type="scientific">Thermus thermophilus (strain ATCC BAA-163 / DSM 7039 / HB27)</name>
    <dbReference type="NCBI Taxonomy" id="262724"/>
    <lineage>
        <taxon>Bacteria</taxon>
        <taxon>Thermotogati</taxon>
        <taxon>Deinococcota</taxon>
        <taxon>Deinococci</taxon>
        <taxon>Thermales</taxon>
        <taxon>Thermaceae</taxon>
        <taxon>Thermus</taxon>
    </lineage>
</organism>
<name>RL35_THET2</name>
<evidence type="ECO:0000250" key="1"/>
<evidence type="ECO:0000255" key="2">
    <source>
        <dbReference type="HAMAP-Rule" id="MF_00514"/>
    </source>
</evidence>
<evidence type="ECO:0000305" key="3"/>
<evidence type="ECO:0007829" key="4">
    <source>
        <dbReference type="PDB" id="4V63"/>
    </source>
</evidence>
<evidence type="ECO:0007829" key="5">
    <source>
        <dbReference type="PDB" id="4V67"/>
    </source>
</evidence>
<proteinExistence type="evidence at protein level"/>